<evidence type="ECO:0000250" key="1">
    <source>
        <dbReference type="UniProtKB" id="Q8IYR6"/>
    </source>
</evidence>
<evidence type="ECO:0000255" key="2"/>
<evidence type="ECO:0000255" key="3">
    <source>
        <dbReference type="PROSITE-ProRule" id="PRU00076"/>
    </source>
</evidence>
<evidence type="ECO:0000255" key="4">
    <source>
        <dbReference type="PROSITE-ProRule" id="PRU00498"/>
    </source>
</evidence>
<evidence type="ECO:0000255" key="5">
    <source>
        <dbReference type="PROSITE-ProRule" id="PRU00798"/>
    </source>
</evidence>
<evidence type="ECO:0000256" key="6">
    <source>
        <dbReference type="SAM" id="MobiDB-lite"/>
    </source>
</evidence>
<evidence type="ECO:0000269" key="7">
    <source>
    </source>
</evidence>
<evidence type="ECO:0000269" key="8">
    <source>
    </source>
</evidence>
<evidence type="ECO:0000269" key="9">
    <source>
    </source>
</evidence>
<evidence type="ECO:0000303" key="10">
    <source>
    </source>
</evidence>
<evidence type="ECO:0000305" key="11"/>
<organism>
    <name type="scientific">Xenopus laevis</name>
    <name type="common">African clawed frog</name>
    <dbReference type="NCBI Taxonomy" id="8355"/>
    <lineage>
        <taxon>Eukaryota</taxon>
        <taxon>Metazoa</taxon>
        <taxon>Chordata</taxon>
        <taxon>Craniata</taxon>
        <taxon>Vertebrata</taxon>
        <taxon>Euteleostomi</taxon>
        <taxon>Amphibia</taxon>
        <taxon>Batrachia</taxon>
        <taxon>Anura</taxon>
        <taxon>Pipoidea</taxon>
        <taxon>Pipidae</taxon>
        <taxon>Xenopodinae</taxon>
        <taxon>Xenopus</taxon>
        <taxon>Xenopus</taxon>
    </lineage>
</organism>
<comment type="function">
    <text evidence="7 8">Inhibits nodal/nr-1 and bmp signaling during neural patterning through interaction with cripto.</text>
</comment>
<comment type="subunit">
    <text evidence="8">Interacts with cripto.</text>
</comment>
<comment type="subcellular location">
    <subcellularLocation>
        <location evidence="1">Cell membrane</location>
        <topology evidence="2">Single-pass type I membrane protein</topology>
    </subcellularLocation>
</comment>
<comment type="tissue specificity">
    <text evidence="9">Expressed at highest levels in brain, and at lower levels in neuroendocrine tissues. Present in neurons from the diencephalon (at protein level).</text>
</comment>
<comment type="developmental stage">
    <text evidence="7">First expressed at stage 10.5. Expression increases during neurula stages and remains at least to tadpole stages.</text>
</comment>
<comment type="similarity">
    <text evidence="11">Belongs to the tomoregulin family.</text>
</comment>
<comment type="sequence caution" evidence="11">
    <conflict type="erroneous initiation">
        <sequence resource="EMBL-CDS" id="AAB37751"/>
    </conflict>
</comment>
<comment type="sequence caution" evidence="11">
    <conflict type="erroneous initiation">
        <sequence resource="EMBL-CDS" id="CAA58792"/>
    </conflict>
</comment>
<name>TEFF1_XENLA</name>
<protein>
    <recommendedName>
        <fullName>Tomoregulin-1</fullName>
        <shortName>TR-1</shortName>
    </recommendedName>
    <alternativeName>
        <fullName>Transmembrane protein with EGF-like and one follistatin-like domain</fullName>
    </alternativeName>
    <alternativeName>
        <fullName evidence="10">X7365</fullName>
    </alternativeName>
</protein>
<gene>
    <name type="primary">tmeff1</name>
</gene>
<dbReference type="EMBL" id="U19879">
    <property type="protein sequence ID" value="AAB37751.1"/>
    <property type="status" value="ALT_INIT"/>
    <property type="molecule type" value="mRNA"/>
</dbReference>
<dbReference type="EMBL" id="X83962">
    <property type="protein sequence ID" value="CAA58792.1"/>
    <property type="status" value="ALT_INIT"/>
    <property type="molecule type" value="mRNA"/>
</dbReference>
<dbReference type="SMR" id="Q91590"/>
<dbReference type="AGR" id="Xenbase:XB-GENE-876383"/>
<dbReference type="Xenbase" id="XB-GENE-876383">
    <property type="gene designation" value="tmeff1.S"/>
</dbReference>
<dbReference type="Proteomes" id="UP000186698">
    <property type="component" value="Unplaced"/>
</dbReference>
<dbReference type="GO" id="GO:0005886">
    <property type="term" value="C:plasma membrane"/>
    <property type="evidence" value="ECO:0000318"/>
    <property type="project" value="GO_Central"/>
</dbReference>
<dbReference type="CDD" id="cd00104">
    <property type="entry name" value="KAZAL_FS"/>
    <property type="match status" value="2"/>
</dbReference>
<dbReference type="FunFam" id="3.30.60.30:FF:000002">
    <property type="entry name" value="tomoregulin-2 isoform X1"/>
    <property type="match status" value="1"/>
</dbReference>
<dbReference type="FunFam" id="3.30.60.30:FF:000020">
    <property type="entry name" value="tomoregulin-2 isoform X2"/>
    <property type="match status" value="1"/>
</dbReference>
<dbReference type="Gene3D" id="3.30.60.30">
    <property type="match status" value="2"/>
</dbReference>
<dbReference type="Gene3D" id="2.10.25.10">
    <property type="entry name" value="Laminin"/>
    <property type="match status" value="1"/>
</dbReference>
<dbReference type="InterPro" id="IPR000742">
    <property type="entry name" value="EGF-like_dom"/>
</dbReference>
<dbReference type="InterPro" id="IPR002350">
    <property type="entry name" value="Kazal_dom"/>
</dbReference>
<dbReference type="InterPro" id="IPR036058">
    <property type="entry name" value="Kazal_dom_sf"/>
</dbReference>
<dbReference type="PANTHER" id="PTHR21632">
    <property type="entry name" value="REGULATORY PROTEIN ZESTE"/>
    <property type="match status" value="1"/>
</dbReference>
<dbReference type="PANTHER" id="PTHR21632:SF3">
    <property type="entry name" value="TOMOREGULIN-1"/>
    <property type="match status" value="1"/>
</dbReference>
<dbReference type="Pfam" id="PF07648">
    <property type="entry name" value="Kazal_2"/>
    <property type="match status" value="2"/>
</dbReference>
<dbReference type="SMART" id="SM00280">
    <property type="entry name" value="KAZAL"/>
    <property type="match status" value="2"/>
</dbReference>
<dbReference type="SUPFAM" id="SSF57196">
    <property type="entry name" value="EGF/Laminin"/>
    <property type="match status" value="1"/>
</dbReference>
<dbReference type="SUPFAM" id="SSF100895">
    <property type="entry name" value="Kazal-type serine protease inhibitors"/>
    <property type="match status" value="2"/>
</dbReference>
<dbReference type="PROSITE" id="PS00022">
    <property type="entry name" value="EGF_1"/>
    <property type="match status" value="1"/>
</dbReference>
<dbReference type="PROSITE" id="PS01186">
    <property type="entry name" value="EGF_2"/>
    <property type="match status" value="1"/>
</dbReference>
<dbReference type="PROSITE" id="PS50026">
    <property type="entry name" value="EGF_3"/>
    <property type="match status" value="1"/>
</dbReference>
<dbReference type="PROSITE" id="PS51465">
    <property type="entry name" value="KAZAL_2"/>
    <property type="match status" value="2"/>
</dbReference>
<proteinExistence type="evidence at protein level"/>
<reference key="1">
    <citation type="journal article" date="1996" name="J. Neurochem.">
        <title>A novel transmembrane protein with epidermal growth factor and follistatin domains expressed in the hypothalamo-hypophysial axis of Xenopus laevis.</title>
        <authorList>
            <person name="Eib D.W."/>
            <person name="Martens G.J.M."/>
        </authorList>
    </citation>
    <scope>NUCLEOTIDE SEQUENCE [MRNA]</scope>
    <scope>TISSUE SPECIFICITY</scope>
    <source>
        <tissue>Pituitary</tissue>
    </source>
</reference>
<reference key="2">
    <citation type="journal article" date="2003" name="Dev. Biol.">
        <title>Regulation of nodal and BMP signaling by tomoregulin-1 (X7365) through novel mechanisms.</title>
        <authorList>
            <person name="Chang C."/>
            <person name="Eggen B.J.L."/>
            <person name="Weinstein D.C."/>
            <person name="Brivanlou A.H."/>
        </authorList>
    </citation>
    <scope>DEVELOPMENTAL STAGE</scope>
    <scope>FUNCTION</scope>
</reference>
<reference key="3">
    <citation type="journal article" date="2003" name="Genes Dev.">
        <title>Tomoregulin-1 (TMEFF1) inhibits nodal signaling through direct binding to the nodal coreceptor Cripto.</title>
        <authorList>
            <person name="Harms P.W."/>
            <person name="Chang C."/>
        </authorList>
    </citation>
    <scope>FUNCTION</scope>
    <scope>INTERACTION WITH CRIPTO</scope>
</reference>
<feature type="signal peptide" evidence="2">
    <location>
        <begin position="1"/>
        <end position="36"/>
    </location>
</feature>
<feature type="chain" id="PRO_0000286059" description="Tomoregulin-1" evidence="2">
    <location>
        <begin position="37"/>
        <end position="370"/>
    </location>
</feature>
<feature type="topological domain" description="Extracellular" evidence="11">
    <location>
        <begin position="37"/>
        <end position="320"/>
    </location>
</feature>
<feature type="transmembrane region" description="Helical" evidence="2">
    <location>
        <begin position="321"/>
        <end position="341"/>
    </location>
</feature>
<feature type="topological domain" description="Cytoplasmic" evidence="11">
    <location>
        <begin position="342"/>
        <end position="370"/>
    </location>
</feature>
<feature type="domain" description="Kazal-like 1" evidence="5">
    <location>
        <begin position="88"/>
        <end position="135"/>
    </location>
</feature>
<feature type="domain" description="Kazal-like 2" evidence="5">
    <location>
        <begin position="179"/>
        <end position="227"/>
    </location>
</feature>
<feature type="domain" description="EGF-like" evidence="3">
    <location>
        <begin position="261"/>
        <end position="301"/>
    </location>
</feature>
<feature type="region of interest" description="Disordered" evidence="6">
    <location>
        <begin position="349"/>
        <end position="370"/>
    </location>
</feature>
<feature type="compositionally biased region" description="Polar residues" evidence="6">
    <location>
        <begin position="356"/>
        <end position="370"/>
    </location>
</feature>
<feature type="site" description="Reactive bond" evidence="5">
    <location>
        <begin position="95"/>
        <end position="96"/>
    </location>
</feature>
<feature type="site" description="Reactive bond" evidence="5">
    <location>
        <begin position="186"/>
        <end position="187"/>
    </location>
</feature>
<feature type="glycosylation site" description="N-linked (GlcNAc...) asparagine" evidence="4">
    <location>
        <position position="53"/>
    </location>
</feature>
<feature type="disulfide bond" evidence="5">
    <location>
        <begin position="89"/>
        <end position="119"/>
    </location>
</feature>
<feature type="disulfide bond" evidence="5">
    <location>
        <begin position="93"/>
        <end position="112"/>
    </location>
</feature>
<feature type="disulfide bond" evidence="5">
    <location>
        <begin position="101"/>
        <end position="133"/>
    </location>
</feature>
<feature type="disulfide bond" evidence="5">
    <location>
        <begin position="180"/>
        <end position="211"/>
    </location>
</feature>
<feature type="disulfide bond" evidence="5">
    <location>
        <begin position="184"/>
        <end position="204"/>
    </location>
</feature>
<feature type="disulfide bond" evidence="5">
    <location>
        <begin position="193"/>
        <end position="225"/>
    </location>
</feature>
<feature type="disulfide bond" evidence="3">
    <location>
        <begin position="265"/>
        <end position="278"/>
    </location>
</feature>
<feature type="disulfide bond" evidence="3">
    <location>
        <begin position="273"/>
        <end position="289"/>
    </location>
</feature>
<feature type="disulfide bond" evidence="3">
    <location>
        <begin position="291"/>
        <end position="300"/>
    </location>
</feature>
<accession>Q91590</accession>
<keyword id="KW-1003">Cell membrane</keyword>
<keyword id="KW-0217">Developmental protein</keyword>
<keyword id="KW-1015">Disulfide bond</keyword>
<keyword id="KW-0245">EGF-like domain</keyword>
<keyword id="KW-0325">Glycoprotein</keyword>
<keyword id="KW-0472">Membrane</keyword>
<keyword id="KW-1185">Reference proteome</keyword>
<keyword id="KW-0677">Repeat</keyword>
<keyword id="KW-0732">Signal</keyword>
<keyword id="KW-0812">Transmembrane</keyword>
<keyword id="KW-1133">Transmembrane helix</keyword>
<sequence length="370" mass="40330">MDGLHPASWMLLLGSLAFWSASSLLLFSLALPGARASNQLLSECHNGKGKGINCSELTVRESEVRVCDESSCKYGGVCKEEGDVLKCICQFQCQTNYAPVCGSNGDTYQNECFLRRSACKQQKDITVVARGPCFSDIASGSGEGEYEGSGGEVHKKHSKCGVCKFGAECDEDAGDVGCVCNIDCSGHNFNPVCATDGSSYSNPCLVREASCLRQEQIDVKHIRSCIETDETSIMGKKDEGLQNRPEVKDSTDQREGDFMGNYIPCSENYNGYCVHGKCELSYSSQKASCRCDSGYTGQYCDKTDFNILYVVPSRQKLTHVLIAAIIGAVQIAIIVAIVMCITRKCPKNNRGRRQKQNLGHFSSDTSSRMV</sequence>